<name>EPB41_HUMAN</name>
<organism>
    <name type="scientific">Homo sapiens</name>
    <name type="common">Human</name>
    <dbReference type="NCBI Taxonomy" id="9606"/>
    <lineage>
        <taxon>Eukaryota</taxon>
        <taxon>Metazoa</taxon>
        <taxon>Chordata</taxon>
        <taxon>Craniata</taxon>
        <taxon>Vertebrata</taxon>
        <taxon>Euteleostomi</taxon>
        <taxon>Mammalia</taxon>
        <taxon>Eutheria</taxon>
        <taxon>Euarchontoglires</taxon>
        <taxon>Primates</taxon>
        <taxon>Haplorrhini</taxon>
        <taxon>Catarrhini</taxon>
        <taxon>Hominidae</taxon>
        <taxon>Homo</taxon>
    </lineage>
</organism>
<gene>
    <name evidence="20" type="primary">EPB41</name>
    <name type="synonym">E41P</name>
</gene>
<sequence length="864" mass="97017">MTTEKSLVTEAENSQHQQKEEGEEAINSGQQEPQQEESCQTAAEGDNWCEQKLKASNGDTPTHEDLTKNKERTSESRGLSRLFSSFLKRPKSQVSEEEGKEVESDKEKGEGGQKEIEFGTSLDEEIILKAPIAAPEPELKTDPSLDLHSLSSAETQPAQEELREDPDFEIKEGEGLEECSKIEVKEESPQSKAETELKASQKPIRKHRNMHCKVSLLDDTVYECVVEKHAKGQDLLKRVCEHLNLLEEDYFGLAIWDNATSKTWLDSAKEIKKQVRGVPWNFTFNVKFYPPDPAQLTEDITRYYLCLQLRQDIVAGRLPCSFATLALLGSYTIQSELGDYDPELHGVDYVSDFKLAPNQTKELEEKVMELHKSYRSMTPAQADLEFLENAKKLSMYGVDLHKAKDLEGVDIILGVCSSGLLVYKDKLRINRFPWPKVLKISYKRSSFFIKIRPGEQEQYESTIGFKLPSYRAAKKLWKVCVEHHTFFRLTSTDTIPKSKFLALGSKFRYSGRTQAQTRQASALIDRPAPHFERTASKRASRSLDGAAAVDSADRSPRPTSAPAITQGQVAEGGVLDASAKKTVVPKAQKETVKAEVKKEDEPPEQAEPEPTEAWKVEKTHIEVTVPTSNGDQTQKLAEKTEDLIRMRKKKRERLDGENIYIRHSNLMLEDLDKSQEEIKKHHASISELKKNFMESVPEPRPSEWDKRLSTHSPFRTLNINGQIPTGEGPPLVKTQTVTISDNANAVKSEIPTKDVPIVHTETKTITYEAAQTDDNSGDLDPGVLLTAQTITSETPSSTTTTQITKTVKGGISETRIEKRIVITGDADIDHDQVLVQAIKEAKEQHPDMSVTKVVVHQETEIADE</sequence>
<keyword id="KW-0002">3D-structure</keyword>
<keyword id="KW-0009">Actin-binding</keyword>
<keyword id="KW-0025">Alternative splicing</keyword>
<keyword id="KW-0112">Calmodulin-binding</keyword>
<keyword id="KW-0131">Cell cycle</keyword>
<keyword id="KW-0132">Cell division</keyword>
<keyword id="KW-0963">Cytoplasm</keyword>
<keyword id="KW-0206">Cytoskeleton</keyword>
<keyword id="KW-0903">Direct protein sequencing</keyword>
<keyword id="KW-0250">Elliptocytosis</keyword>
<keyword id="KW-0325">Glycoprotein</keyword>
<keyword id="KW-0360">Hereditary hemolytic anemia</keyword>
<keyword id="KW-0498">Mitosis</keyword>
<keyword id="KW-0539">Nucleus</keyword>
<keyword id="KW-0597">Phosphoprotein</keyword>
<keyword id="KW-1267">Proteomics identification</keyword>
<keyword id="KW-0668">Pyropoikilocytosis</keyword>
<keyword id="KW-1185">Reference proteome</keyword>
<keyword id="KW-0813">Transport</keyword>
<feature type="chain" id="PRO_0000219390" description="Protein 4.1">
    <location>
        <begin position="1"/>
        <end position="864"/>
    </location>
</feature>
<feature type="domain" description="FERM" evidence="2">
    <location>
        <begin position="210"/>
        <end position="491"/>
    </location>
</feature>
<feature type="region of interest" description="Disordered" evidence="3">
    <location>
        <begin position="1"/>
        <end position="122"/>
    </location>
</feature>
<feature type="region of interest" description="Disordered" evidence="3">
    <location>
        <begin position="136"/>
        <end position="170"/>
    </location>
</feature>
<feature type="region of interest" description="Disordered" evidence="3">
    <location>
        <begin position="182"/>
        <end position="202"/>
    </location>
</feature>
<feature type="region of interest" description="Hydrophilic">
    <location>
        <begin position="494"/>
        <end position="614"/>
    </location>
</feature>
<feature type="region of interest" description="Disordered" evidence="3">
    <location>
        <begin position="518"/>
        <end position="572"/>
    </location>
</feature>
<feature type="region of interest" description="Disordered" evidence="3">
    <location>
        <begin position="586"/>
        <end position="611"/>
    </location>
</feature>
<feature type="region of interest" description="Spectrin--actin-binding">
    <location>
        <begin position="615"/>
        <end position="713"/>
    </location>
</feature>
<feature type="region of interest" description="C-terminal (CTD)">
    <location>
        <begin position="714"/>
        <end position="864"/>
    </location>
</feature>
<feature type="compositionally biased region" description="Polar residues" evidence="3">
    <location>
        <begin position="1"/>
        <end position="16"/>
    </location>
</feature>
<feature type="compositionally biased region" description="Polar residues" evidence="3">
    <location>
        <begin position="27"/>
        <end position="41"/>
    </location>
</feature>
<feature type="compositionally biased region" description="Basic and acidic residues" evidence="3">
    <location>
        <begin position="61"/>
        <end position="75"/>
    </location>
</feature>
<feature type="compositionally biased region" description="Low complexity" evidence="3">
    <location>
        <begin position="76"/>
        <end position="87"/>
    </location>
</feature>
<feature type="compositionally biased region" description="Basic and acidic residues" evidence="3">
    <location>
        <begin position="101"/>
        <end position="117"/>
    </location>
</feature>
<feature type="compositionally biased region" description="Polar residues" evidence="3">
    <location>
        <begin position="149"/>
        <end position="158"/>
    </location>
</feature>
<feature type="compositionally biased region" description="Basic and acidic residues" evidence="3">
    <location>
        <begin position="182"/>
        <end position="199"/>
    </location>
</feature>
<feature type="compositionally biased region" description="Basic and acidic residues" evidence="3">
    <location>
        <begin position="587"/>
        <end position="600"/>
    </location>
</feature>
<feature type="compositionally biased region" description="Acidic residues" evidence="3">
    <location>
        <begin position="601"/>
        <end position="610"/>
    </location>
</feature>
<feature type="modified residue" description="Phosphoserine" evidence="23">
    <location>
        <position position="14"/>
    </location>
</feature>
<feature type="modified residue" description="Phosphothreonine; by CDK1" evidence="7 24">
    <location>
        <position position="60"/>
    </location>
</feature>
<feature type="modified residue" description="Phosphoserine" evidence="22">
    <location>
        <position position="84"/>
    </location>
</feature>
<feature type="modified residue" description="Phosphoserine" evidence="22">
    <location>
        <position position="85"/>
    </location>
</feature>
<feature type="modified residue" description="Phosphoserine" evidence="24">
    <location>
        <position position="95"/>
    </location>
</feature>
<feature type="modified residue" description="Phosphoserine" evidence="24">
    <location>
        <position position="104"/>
    </location>
</feature>
<feature type="modified residue" description="Phosphoserine" evidence="1">
    <location>
        <position position="121"/>
    </location>
</feature>
<feature type="modified residue" description="Phosphoserine" evidence="23">
    <location>
        <position position="149"/>
    </location>
</feature>
<feature type="modified residue" description="Phosphoserine" evidence="23">
    <location>
        <position position="151"/>
    </location>
</feature>
<feature type="modified residue" description="Phosphoserine" evidence="23">
    <location>
        <position position="152"/>
    </location>
</feature>
<feature type="modified residue" description="Phosphoserine" evidence="21 22 24">
    <location>
        <position position="188"/>
    </location>
</feature>
<feature type="modified residue" description="Phosphoserine" evidence="21 24">
    <location>
        <position position="191"/>
    </location>
</feature>
<feature type="modified residue" description="Phosphotyrosine" evidence="1">
    <location>
        <position position="222"/>
    </location>
</feature>
<feature type="modified residue" description="Phosphothreonine" evidence="24">
    <location>
        <position position="378"/>
    </location>
</feature>
<feature type="modified residue" description="Phosphoserine" evidence="24">
    <location>
        <position position="521"/>
    </location>
</feature>
<feature type="modified residue" description="Phosphoserine" evidence="9 24">
    <location>
        <position position="540"/>
    </location>
</feature>
<feature type="modified residue" description="Phosphoserine" evidence="24 25">
    <location>
        <position position="542"/>
    </location>
</feature>
<feature type="modified residue" description="Phosphoserine" evidence="21 25">
    <location>
        <position position="555"/>
    </location>
</feature>
<feature type="modified residue" description="Phosphotyrosine; by EGFR" evidence="8 24">
    <location>
        <position position="660"/>
    </location>
</feature>
<feature type="modified residue" description="Phosphoserine" evidence="1">
    <location>
        <position position="664"/>
    </location>
</feature>
<feature type="modified residue" description="Phosphoserine" evidence="24">
    <location>
        <position position="674"/>
    </location>
</feature>
<feature type="modified residue" description="Phosphoserine" evidence="24">
    <location>
        <position position="684"/>
    </location>
</feature>
<feature type="modified residue" description="Phosphoserine" evidence="9 24">
    <location>
        <position position="709"/>
    </location>
</feature>
<feature type="modified residue" description="Phosphoserine; by CDK1" evidence="7 21 22 24">
    <location>
        <position position="712"/>
    </location>
</feature>
<feature type="modified residue" description="Phosphothreonine" evidence="24">
    <location>
        <position position="736"/>
    </location>
</feature>
<feature type="modified residue" description="Phosphothreonine" evidence="24">
    <location>
        <position position="859"/>
    </location>
</feature>
<feature type="splice variant" id="VSP_000468" description="In isoform 3, isoform 4 and isoform 6." evidence="15 16 17 18">
    <location>
        <begin position="1"/>
        <end position="209"/>
    </location>
</feature>
<feature type="splice variant" id="VSP_000469" description="In isoform 5 and isoform 6." evidence="16 17">
    <location>
        <begin position="228"/>
        <end position="262"/>
    </location>
</feature>
<feature type="splice variant" id="VSP_000470" description="In isoform 2, isoform 4, isoform 5 and isoform 6." evidence="16 17 18">
    <location>
        <begin position="616"/>
        <end position="648"/>
    </location>
</feature>
<feature type="splice variant" id="VSP_000471" description="In isoform 3 and isoform 7." evidence="14 15">
    <location>
        <begin position="635"/>
        <end position="648"/>
    </location>
</feature>
<feature type="splice variant" id="VSP_000472" description="In isoform 5 and isoform 6." evidence="16 17">
    <location>
        <begin position="649"/>
        <end position="669"/>
    </location>
</feature>
<feature type="splice variant" id="VSP_012872" description="In isoform 7." evidence="14">
    <original>PPLVKT</original>
    <variation>VSTLST</variation>
    <location>
        <begin position="729"/>
        <end position="734"/>
    </location>
</feature>
<feature type="splice variant" id="VSP_012873" description="In isoform 7." evidence="14">
    <location>
        <begin position="735"/>
        <end position="864"/>
    </location>
</feature>
<feature type="splice variant" id="VSP_000473" description="In isoform 4." evidence="18">
    <location>
        <begin position="772"/>
        <end position="805"/>
    </location>
</feature>
<feature type="sequence variant" id="VAR_009122" description="In dbSNP:rs111642750." evidence="13">
    <original>V</original>
    <variation>I</variation>
    <location>
        <position position="214"/>
    </location>
</feature>
<feature type="mutagenesis site" description="Loss of CDK1-mediated phosphorylation. Abolishes targeting onto the mitotic spindle; when associated with A-712." evidence="7">
    <original>T</original>
    <variation>A</variation>
    <location>
        <position position="60"/>
    </location>
</feature>
<feature type="mutagenesis site" description="Loss of CDK1-mediated phosphorylation. Abolishes targeting onto the mitotic spindle; when associated with A-60." evidence="7">
    <original>S</original>
    <variation>A</variation>
    <location>
        <position position="712"/>
    </location>
</feature>
<feature type="sequence conflict" description="In Ref. 5; AAD42222." evidence="19" ref="5">
    <original>Q</original>
    <variation>H</variation>
    <location>
        <position position="51"/>
    </location>
</feature>
<feature type="sequence conflict" description="In Ref. 5; AAD42222." evidence="19" ref="5">
    <original>S</original>
    <variation>N</variation>
    <location>
        <position position="76"/>
    </location>
</feature>
<feature type="sequence conflict" description="In Ref. 9; AAD42223." evidence="19" ref="9">
    <original>F</original>
    <variation>S</variation>
    <location>
        <position position="168"/>
    </location>
</feature>
<feature type="sequence conflict" description="In Ref. 5; AAD42222." evidence="19" ref="5">
    <original>A</original>
    <variation>T</variation>
    <location>
        <position position="259"/>
    </location>
</feature>
<feature type="sequence conflict" description="In Ref. 5; AAD42222." evidence="19" ref="5">
    <original>N</original>
    <variation>S</variation>
    <location>
        <position position="665"/>
    </location>
</feature>
<feature type="sequence conflict" description="In Ref. 10; no nucleotide entry." evidence="19" ref="10">
    <original>E</original>
    <variation>K</variation>
    <location>
        <position position="669"/>
    </location>
</feature>
<feature type="sequence conflict" description="In Ref. 5; AAD42222." evidence="19" ref="5">
    <original>K</original>
    <variation>E</variation>
    <location>
        <position position="679"/>
    </location>
</feature>
<feature type="sequence conflict" description="In Ref. 2; no nucleotide entry and 3; AAA35793/AAA35794." evidence="19" ref="2 3">
    <original>Q</original>
    <variation>K</variation>
    <location>
        <position position="802"/>
    </location>
</feature>
<feature type="sequence conflict" description="In Ref. 10; no nucleotide entry." evidence="19" ref="10">
    <original>K</original>
    <variation>L</variation>
    <location>
        <position position="852"/>
    </location>
</feature>
<feature type="sequence conflict" description="In Ref. 10; no nucleotide entry." evidence="19" ref="10">
    <original>D</original>
    <variation>E</variation>
    <location>
        <position position="863"/>
    </location>
</feature>
<feature type="strand" evidence="27">
    <location>
        <begin position="211"/>
        <end position="215"/>
    </location>
</feature>
<feature type="strand" evidence="27">
    <location>
        <begin position="221"/>
        <end position="225"/>
    </location>
</feature>
<feature type="helix" evidence="27">
    <location>
        <begin position="232"/>
        <end position="243"/>
    </location>
</feature>
<feature type="helix" evidence="27">
    <location>
        <begin position="248"/>
        <end position="250"/>
    </location>
</feature>
<feature type="strand" evidence="27">
    <location>
        <begin position="251"/>
        <end position="258"/>
    </location>
</feature>
<feature type="strand" evidence="27">
    <location>
        <begin position="261"/>
        <end position="264"/>
    </location>
</feature>
<feature type="helix" evidence="27">
    <location>
        <begin position="271"/>
        <end position="274"/>
    </location>
</feature>
<feature type="turn" evidence="26">
    <location>
        <begin position="275"/>
        <end position="277"/>
    </location>
</feature>
<feature type="strand" evidence="27">
    <location>
        <begin position="281"/>
        <end position="288"/>
    </location>
</feature>
<feature type="helix" evidence="27">
    <location>
        <begin position="293"/>
        <end position="295"/>
    </location>
</feature>
<feature type="helix" evidence="27">
    <location>
        <begin position="299"/>
        <end position="314"/>
    </location>
</feature>
<feature type="helix" evidence="27">
    <location>
        <begin position="322"/>
        <end position="337"/>
    </location>
</feature>
<feature type="helix" evidence="27">
    <location>
        <begin position="342"/>
        <end position="345"/>
    </location>
</feature>
<feature type="helix" evidence="26">
    <location>
        <begin position="350"/>
        <end position="352"/>
    </location>
</feature>
<feature type="strand" evidence="27">
    <location>
        <begin position="356"/>
        <end position="358"/>
    </location>
</feature>
<feature type="helix" evidence="27">
    <location>
        <begin position="361"/>
        <end position="372"/>
    </location>
</feature>
<feature type="helix" evidence="27">
    <location>
        <begin position="379"/>
        <end position="390"/>
    </location>
</feature>
<feature type="turn" evidence="27">
    <location>
        <begin position="394"/>
        <end position="397"/>
    </location>
</feature>
<feature type="strand" evidence="27">
    <location>
        <begin position="399"/>
        <end position="404"/>
    </location>
</feature>
<feature type="strand" evidence="27">
    <location>
        <begin position="410"/>
        <end position="415"/>
    </location>
</feature>
<feature type="strand" evidence="27">
    <location>
        <begin position="417"/>
        <end position="424"/>
    </location>
</feature>
<feature type="strand" evidence="27">
    <location>
        <begin position="427"/>
        <end position="433"/>
    </location>
</feature>
<feature type="helix" evidence="27">
    <location>
        <begin position="434"/>
        <end position="436"/>
    </location>
</feature>
<feature type="strand" evidence="27">
    <location>
        <begin position="437"/>
        <end position="443"/>
    </location>
</feature>
<feature type="strand" evidence="27">
    <location>
        <begin position="446"/>
        <end position="451"/>
    </location>
</feature>
<feature type="strand" evidence="26">
    <location>
        <begin position="454"/>
        <end position="458"/>
    </location>
</feature>
<feature type="strand" evidence="27">
    <location>
        <begin position="461"/>
        <end position="466"/>
    </location>
</feature>
<feature type="helix" evidence="27">
    <location>
        <begin position="470"/>
        <end position="486"/>
    </location>
</feature>
<reference key="1">
    <citation type="journal article" date="1986" name="Proc. Natl. Acad. Sci. U.S.A.">
        <title>Molecular cloning of protein 4.1, a major structural element of the human erythrocyte membrane skeleton.</title>
        <authorList>
            <person name="Conboy J.G."/>
            <person name="Kan Y.W."/>
            <person name="Shohet S.B."/>
            <person name="Mohandas N."/>
        </authorList>
    </citation>
    <scope>NUCLEOTIDE SEQUENCE [MRNA] (ISOFORM 4)</scope>
    <scope>INVOLVEMENT IN EL1</scope>
    <scope>PROTEIN SEQUENCE OF 378-393</scope>
    <source>
        <tissue>Reticulocyte</tissue>
    </source>
</reference>
<reference key="2">
    <citation type="journal article" date="1988" name="Adv. Exp. Med. Biol.">
        <title>Expression of specific isoforms of protein 4.1 in erythroid and non-erythroid tissues.</title>
        <authorList>
            <person name="Tang T.K."/>
            <person name="Leto T.L."/>
            <person name="Marchesi V.T."/>
            <person name="Benz E.J. Jr."/>
        </authorList>
    </citation>
    <scope>NUCLEOTIDE SEQUENCE [MRNA] (ISOFORMS 5 AND 6)</scope>
</reference>
<reference key="3">
    <citation type="journal article" date="1988" name="Proc. Natl. Acad. Sci. U.S.A.">
        <title>Selective expression of an erythroid-specific isoform of protein 4.1.</title>
        <authorList>
            <person name="Tang T.K."/>
            <person name="Leto T.L."/>
            <person name="Correas I."/>
            <person name="Alonso M.A."/>
            <person name="Marchesi V.T."/>
            <person name="Benz E.J. Jr."/>
        </authorList>
    </citation>
    <scope>NUCLEOTIDE SEQUENCE [MRNA] (ISOFORMS 5 AND 6)</scope>
</reference>
<reference key="4">
    <citation type="journal article" date="1991" name="J. Biol. Chem.">
        <title>Tissue- and development-specific alternative RNA splicing regulates expression of multiple isoforms of erythroid membrane protein 4.1.</title>
        <authorList>
            <person name="Conboy J.G."/>
            <person name="Chan J.Y.C."/>
            <person name="Chasis J.A."/>
            <person name="Kan Y.W."/>
            <person name="Mohandas N."/>
        </authorList>
    </citation>
    <scope>NUCLEOTIDE SEQUENCE [MRNA] (ISOFORM 3)</scope>
</reference>
<reference key="5">
    <citation type="submission" date="1999-06" db="EMBL/GenBank/DDBJ databases">
        <title>Sequence of protein 4.1 from a human neuroblastoma cell line: LAN5.</title>
        <authorList>
            <person name="Huang S.C."/>
            <person name="Wang C."/>
            <person name="Lichtenauer U."/>
            <person name="Vortmeyer A."/>
            <person name="Zhuang Z."/>
        </authorList>
    </citation>
    <scope>NUCLEOTIDE SEQUENCE [MRNA] (ISOFORM 1)</scope>
</reference>
<reference key="6">
    <citation type="journal article" date="2006" name="Nature">
        <title>The DNA sequence and biological annotation of human chromosome 1.</title>
        <authorList>
            <person name="Gregory S.G."/>
            <person name="Barlow K.F."/>
            <person name="McLay K.E."/>
            <person name="Kaul R."/>
            <person name="Swarbreck D."/>
            <person name="Dunham A."/>
            <person name="Scott C.E."/>
            <person name="Howe K.L."/>
            <person name="Woodfine K."/>
            <person name="Spencer C.C.A."/>
            <person name="Jones M.C."/>
            <person name="Gillson C."/>
            <person name="Searle S."/>
            <person name="Zhou Y."/>
            <person name="Kokocinski F."/>
            <person name="McDonald L."/>
            <person name="Evans R."/>
            <person name="Phillips K."/>
            <person name="Atkinson A."/>
            <person name="Cooper R."/>
            <person name="Jones C."/>
            <person name="Hall R.E."/>
            <person name="Andrews T.D."/>
            <person name="Lloyd C."/>
            <person name="Ainscough R."/>
            <person name="Almeida J.P."/>
            <person name="Ambrose K.D."/>
            <person name="Anderson F."/>
            <person name="Andrew R.W."/>
            <person name="Ashwell R.I.S."/>
            <person name="Aubin K."/>
            <person name="Babbage A.K."/>
            <person name="Bagguley C.L."/>
            <person name="Bailey J."/>
            <person name="Beasley H."/>
            <person name="Bethel G."/>
            <person name="Bird C.P."/>
            <person name="Bray-Allen S."/>
            <person name="Brown J.Y."/>
            <person name="Brown A.J."/>
            <person name="Buckley D."/>
            <person name="Burton J."/>
            <person name="Bye J."/>
            <person name="Carder C."/>
            <person name="Chapman J.C."/>
            <person name="Clark S.Y."/>
            <person name="Clarke G."/>
            <person name="Clee C."/>
            <person name="Cobley V."/>
            <person name="Collier R.E."/>
            <person name="Corby N."/>
            <person name="Coville G.J."/>
            <person name="Davies J."/>
            <person name="Deadman R."/>
            <person name="Dunn M."/>
            <person name="Earthrowl M."/>
            <person name="Ellington A.G."/>
            <person name="Errington H."/>
            <person name="Frankish A."/>
            <person name="Frankland J."/>
            <person name="French L."/>
            <person name="Garner P."/>
            <person name="Garnett J."/>
            <person name="Gay L."/>
            <person name="Ghori M.R.J."/>
            <person name="Gibson R."/>
            <person name="Gilby L.M."/>
            <person name="Gillett W."/>
            <person name="Glithero R.J."/>
            <person name="Grafham D.V."/>
            <person name="Griffiths C."/>
            <person name="Griffiths-Jones S."/>
            <person name="Grocock R."/>
            <person name="Hammond S."/>
            <person name="Harrison E.S.I."/>
            <person name="Hart E."/>
            <person name="Haugen E."/>
            <person name="Heath P.D."/>
            <person name="Holmes S."/>
            <person name="Holt K."/>
            <person name="Howden P.J."/>
            <person name="Hunt A.R."/>
            <person name="Hunt S.E."/>
            <person name="Hunter G."/>
            <person name="Isherwood J."/>
            <person name="James R."/>
            <person name="Johnson C."/>
            <person name="Johnson D."/>
            <person name="Joy A."/>
            <person name="Kay M."/>
            <person name="Kershaw J.K."/>
            <person name="Kibukawa M."/>
            <person name="Kimberley A.M."/>
            <person name="King A."/>
            <person name="Knights A.J."/>
            <person name="Lad H."/>
            <person name="Laird G."/>
            <person name="Lawlor S."/>
            <person name="Leongamornlert D.A."/>
            <person name="Lloyd D.M."/>
            <person name="Loveland J."/>
            <person name="Lovell J."/>
            <person name="Lush M.J."/>
            <person name="Lyne R."/>
            <person name="Martin S."/>
            <person name="Mashreghi-Mohammadi M."/>
            <person name="Matthews L."/>
            <person name="Matthews N.S.W."/>
            <person name="McLaren S."/>
            <person name="Milne S."/>
            <person name="Mistry S."/>
            <person name="Moore M.J.F."/>
            <person name="Nickerson T."/>
            <person name="O'Dell C.N."/>
            <person name="Oliver K."/>
            <person name="Palmeiri A."/>
            <person name="Palmer S.A."/>
            <person name="Parker A."/>
            <person name="Patel D."/>
            <person name="Pearce A.V."/>
            <person name="Peck A.I."/>
            <person name="Pelan S."/>
            <person name="Phelps K."/>
            <person name="Phillimore B.J."/>
            <person name="Plumb R."/>
            <person name="Rajan J."/>
            <person name="Raymond C."/>
            <person name="Rouse G."/>
            <person name="Saenphimmachak C."/>
            <person name="Sehra H.K."/>
            <person name="Sheridan E."/>
            <person name="Shownkeen R."/>
            <person name="Sims S."/>
            <person name="Skuce C.D."/>
            <person name="Smith M."/>
            <person name="Steward C."/>
            <person name="Subramanian S."/>
            <person name="Sycamore N."/>
            <person name="Tracey A."/>
            <person name="Tromans A."/>
            <person name="Van Helmond Z."/>
            <person name="Wall M."/>
            <person name="Wallis J.M."/>
            <person name="White S."/>
            <person name="Whitehead S.L."/>
            <person name="Wilkinson J.E."/>
            <person name="Willey D.L."/>
            <person name="Williams H."/>
            <person name="Wilming L."/>
            <person name="Wray P.W."/>
            <person name="Wu Z."/>
            <person name="Coulson A."/>
            <person name="Vaudin M."/>
            <person name="Sulston J.E."/>
            <person name="Durbin R.M."/>
            <person name="Hubbard T."/>
            <person name="Wooster R."/>
            <person name="Dunham I."/>
            <person name="Carter N.P."/>
            <person name="McVean G."/>
            <person name="Ross M.T."/>
            <person name="Harrow J."/>
            <person name="Olson M.V."/>
            <person name="Beck S."/>
            <person name="Rogers J."/>
            <person name="Bentley D.R."/>
        </authorList>
    </citation>
    <scope>NUCLEOTIDE SEQUENCE [LARGE SCALE GENOMIC DNA]</scope>
</reference>
<reference key="7">
    <citation type="submission" date="2005-09" db="EMBL/GenBank/DDBJ databases">
        <authorList>
            <person name="Mural R.J."/>
            <person name="Istrail S."/>
            <person name="Sutton G.G."/>
            <person name="Florea L."/>
            <person name="Halpern A.L."/>
            <person name="Mobarry C.M."/>
            <person name="Lippert R."/>
            <person name="Walenz B."/>
            <person name="Shatkay H."/>
            <person name="Dew I."/>
            <person name="Miller J.R."/>
            <person name="Flanigan M.J."/>
            <person name="Edwards N.J."/>
            <person name="Bolanos R."/>
            <person name="Fasulo D."/>
            <person name="Halldorsson B.V."/>
            <person name="Hannenhalli S."/>
            <person name="Turner R."/>
            <person name="Yooseph S."/>
            <person name="Lu F."/>
            <person name="Nusskern D.R."/>
            <person name="Shue B.C."/>
            <person name="Zheng X.H."/>
            <person name="Zhong F."/>
            <person name="Delcher A.L."/>
            <person name="Huson D.H."/>
            <person name="Kravitz S.A."/>
            <person name="Mouchard L."/>
            <person name="Reinert K."/>
            <person name="Remington K.A."/>
            <person name="Clark A.G."/>
            <person name="Waterman M.S."/>
            <person name="Eichler E.E."/>
            <person name="Adams M.D."/>
            <person name="Hunkapiller M.W."/>
            <person name="Myers E.W."/>
            <person name="Venter J.C."/>
        </authorList>
    </citation>
    <scope>NUCLEOTIDE SEQUENCE [LARGE SCALE GENOMIC DNA]</scope>
</reference>
<reference key="8">
    <citation type="journal article" date="2004" name="Genome Res.">
        <title>The status, quality, and expansion of the NIH full-length cDNA project: the Mammalian Gene Collection (MGC).</title>
        <authorList>
            <consortium name="The MGC Project Team"/>
        </authorList>
    </citation>
    <scope>NUCLEOTIDE SEQUENCE [LARGE SCALE MRNA] (ISOFORM 7)</scope>
    <source>
        <tissue>Brain</tissue>
    </source>
</reference>
<reference key="9">
    <citation type="submission" date="1999-06" db="EMBL/GenBank/DDBJ databases">
        <title>Valine to isoleucine polymorphism in exon 4 of human protein 4.1.</title>
        <authorList>
            <person name="Lichtenauer U."/>
            <person name="Huang S.C."/>
            <person name="Vortmeyer A."/>
            <person name="Zhuang Z."/>
        </authorList>
    </citation>
    <scope>NUCLEOTIDE SEQUENCE [GENOMIC DNA] OF 157-227</scope>
    <scope>VARIANT ILE-214</scope>
</reference>
<reference key="10">
    <citation type="journal article" date="1988" name="Proc. Natl. Acad. Sci. U.S.A.">
        <title>Multiple protein 4.1 isoforms produced by alternative splicing in human erythroid cells.</title>
        <authorList>
            <person name="Conboy J.G."/>
            <person name="Chan J."/>
            <person name="Mohandas N."/>
            <person name="Kan Y.W."/>
        </authorList>
    </citation>
    <scope>NUCLEOTIDE SEQUENCE OF 669-864 (ISOFORM 4)</scope>
    <scope>ALTERNATIVE SPLICING</scope>
</reference>
<reference key="11">
    <citation type="journal article" date="1990" name="Biochim. Biophys. Acta">
        <title>Identification of two cAMP-dependent phosphorylation sites on erythrocyte protein 4.1.</title>
        <authorList>
            <person name="Horne W.C."/>
            <person name="Prinz W.C."/>
            <person name="Tang E.K."/>
        </authorList>
    </citation>
    <scope>PROTEIN SEQUENCE OF 534-541; 693-701 AND 793-794</scope>
    <scope>PHOSPHORYLATION AT SER-540 AND SER-709</scope>
</reference>
<reference key="12">
    <citation type="journal article" date="1986" name="J. Biol. Chem.">
        <title>Structure of the spectrin-actin binding site of erythrocyte protein 4.1.</title>
        <authorList>
            <person name="Correas I."/>
            <person name="Speicher D.W."/>
            <person name="Marchesi V.T."/>
        </authorList>
    </citation>
    <scope>PROTEIN SEQUENCE OF 648-714</scope>
</reference>
<reference key="13">
    <citation type="journal article" date="1989" name="J. Biol. Chem.">
        <title>O-N-acetyl-D-glucosamine moiety on discrete peptide of multiple protein 4.1 isoforms regulated by alternative pathways.</title>
        <authorList>
            <person name="Inaba M."/>
            <person name="Maede Y."/>
        </authorList>
    </citation>
    <scope>STRUCTURE OF CARBOHYDRATES</scope>
</reference>
<reference key="14">
    <citation type="journal article" date="1991" name="Proc. Natl. Acad. Sci. U.S.A.">
        <title>Phosphorylation of protein 4.1 on tyrosine-418 modulates its function in vitro.</title>
        <authorList>
            <person name="Subrahmanyan G."/>
            <person name="Bertics P.J."/>
            <person name="Anderson R.A."/>
        </authorList>
    </citation>
    <scope>PHOSPHORYLATION AT TYR-660 BY EGFR</scope>
</reference>
<reference key="15">
    <citation type="journal article" date="1994" name="Proc. Natl. Acad. Sci. U.S.A.">
        <title>Cloning and characterization of hdlg: the human homologue of the Drosophila discs large tumor suppressor binds to protein 4.1.</title>
        <authorList>
            <person name="Lue R.A."/>
            <person name="Marfatia S.M."/>
            <person name="Branton D."/>
            <person name="Chishti A.H."/>
        </authorList>
    </citation>
    <scope>INTERACTION WITH DLG1</scope>
</reference>
<reference key="16">
    <citation type="journal article" date="2000" name="J. Biol. Chem.">
        <title>Ca(2+)-dependent and Ca(2+)-independent calmodulin binding sites in erythrocyte protein 4.1. Implications for regulation of protein 4.1 interactions with transmembrane proteins.</title>
        <authorList>
            <person name="Nunomura W."/>
            <person name="Takakuwa Y."/>
            <person name="Parra M."/>
            <person name="Conboy J.G."/>
            <person name="Mohandas N."/>
        </authorList>
    </citation>
    <scope>INTERACTION WITH CALMODULIN</scope>
</reference>
<reference key="17">
    <citation type="journal article" date="2000" name="Mol. Cell. Biol.">
        <title>Protein 4.1 R-135 interacts with a novel centrosomal protein (CPAP) which is associated with the gamma-tubulin complex.</title>
        <authorList>
            <person name="Hung L.-Y."/>
            <person name="Tang C.J."/>
            <person name="Tang T.K."/>
        </authorList>
    </citation>
    <scope>INTERACTION WITH CPAP</scope>
</reference>
<reference key="18">
    <citation type="journal article" date="2001" name="Eur. J. Biochem.">
        <title>Properties of the C-terminal domain of 4.1 proteins.</title>
        <authorList>
            <person name="Scott C."/>
            <person name="Phillips G.W."/>
            <person name="Baines A.J."/>
        </authorList>
    </citation>
    <scope>CHARACTERIZATION OF C-TERMINAL DOMAIN</scope>
</reference>
<reference key="19">
    <citation type="journal article" date="2003" name="J. Biol. Chem.">
        <title>An alternative domain containing a leucine-rich sequence regulates nuclear cytoplasmic localization of protein 4.1R.</title>
        <authorList>
            <person name="Luque C.M."/>
            <person name="Perez-Ferreiro C.M."/>
            <person name="Perez-Gonzalez A."/>
            <person name="Englmeier L."/>
            <person name="Koffa M.D."/>
            <person name="Correas I."/>
        </authorList>
    </citation>
    <scope>SUBCELLULAR LOCATION</scope>
    <scope>ALTERNATIVE SPLICING</scope>
</reference>
<reference key="20">
    <citation type="journal article" date="2005" name="Mol. Biol. Cell">
        <title>Mitotic regulation of protein 4.1R involves phosphorylation by cdc2 kinase.</title>
        <authorList>
            <person name="Huang S.-C."/>
            <person name="Liu E.S."/>
            <person name="Chan S.-H."/>
            <person name="Munagala I.D."/>
            <person name="Cho H.T."/>
            <person name="Jagadeeswaran R."/>
            <person name="Benz E.J. Jr."/>
        </authorList>
    </citation>
    <scope>MUTAGENESIS OF THR-60 AND SER-712</scope>
    <scope>PHOSPHORYLATION AT THR-60 AND SER-712</scope>
</reference>
<reference key="21">
    <citation type="journal article" date="2008" name="Proc. Natl. Acad. Sci. U.S.A.">
        <title>A quantitative atlas of mitotic phosphorylation.</title>
        <authorList>
            <person name="Dephoure N."/>
            <person name="Zhou C."/>
            <person name="Villen J."/>
            <person name="Beausoleil S.A."/>
            <person name="Bakalarski C.E."/>
            <person name="Elledge S.J."/>
            <person name="Gygi S.P."/>
        </authorList>
    </citation>
    <scope>PHOSPHORYLATION [LARGE SCALE ANALYSIS] AT SER-188; SER-191; SER-555 AND SER-712</scope>
    <scope>IDENTIFICATION BY MASS SPECTROMETRY [LARGE SCALE ANALYSIS]</scope>
    <source>
        <tissue>Cervix carcinoma</tissue>
    </source>
</reference>
<reference key="22">
    <citation type="journal article" date="2009" name="Sci. Signal.">
        <title>Quantitative phosphoproteomic analysis of T cell receptor signaling reveals system-wide modulation of protein-protein interactions.</title>
        <authorList>
            <person name="Mayya V."/>
            <person name="Lundgren D.H."/>
            <person name="Hwang S.-I."/>
            <person name="Rezaul K."/>
            <person name="Wu L."/>
            <person name="Eng J.K."/>
            <person name="Rodionov V."/>
            <person name="Han D.K."/>
        </authorList>
    </citation>
    <scope>IDENTIFICATION BY MASS SPECTROMETRY [LARGE SCALE ANALYSIS]</scope>
    <source>
        <tissue>Leukemic T-cell</tissue>
    </source>
</reference>
<reference key="23">
    <citation type="journal article" date="2010" name="Sci. Signal.">
        <title>Quantitative phosphoproteomics reveals widespread full phosphorylation site occupancy during mitosis.</title>
        <authorList>
            <person name="Olsen J.V."/>
            <person name="Vermeulen M."/>
            <person name="Santamaria A."/>
            <person name="Kumar C."/>
            <person name="Miller M.L."/>
            <person name="Jensen L.J."/>
            <person name="Gnad F."/>
            <person name="Cox J."/>
            <person name="Jensen T.S."/>
            <person name="Nigg E.A."/>
            <person name="Brunak S."/>
            <person name="Mann M."/>
        </authorList>
    </citation>
    <scope>PHOSPHORYLATION [LARGE SCALE ANALYSIS] AT SER-84; SER-85; SER-188 AND SER-712</scope>
    <scope>IDENTIFICATION BY MASS SPECTROMETRY [LARGE SCALE ANALYSIS]</scope>
    <source>
        <tissue>Cervix carcinoma</tissue>
    </source>
</reference>
<reference key="24">
    <citation type="journal article" date="2011" name="BMC Syst. Biol.">
        <title>Initial characterization of the human central proteome.</title>
        <authorList>
            <person name="Burkard T.R."/>
            <person name="Planyavsky M."/>
            <person name="Kaupe I."/>
            <person name="Breitwieser F.P."/>
            <person name="Buerckstuemmer T."/>
            <person name="Bennett K.L."/>
            <person name="Superti-Furga G."/>
            <person name="Colinge J."/>
        </authorList>
    </citation>
    <scope>IDENTIFICATION BY MASS SPECTROMETRY [LARGE SCALE ANALYSIS]</scope>
</reference>
<reference key="25">
    <citation type="journal article" date="2011" name="Sci. Signal.">
        <title>System-wide temporal characterization of the proteome and phosphoproteome of human embryonic stem cell differentiation.</title>
        <authorList>
            <person name="Rigbolt K.T."/>
            <person name="Prokhorova T.A."/>
            <person name="Akimov V."/>
            <person name="Henningsen J."/>
            <person name="Johansen P.T."/>
            <person name="Kratchmarova I."/>
            <person name="Kassem M."/>
            <person name="Mann M."/>
            <person name="Olsen J.V."/>
            <person name="Blagoev B."/>
        </authorList>
    </citation>
    <scope>PHOSPHORYLATION [LARGE SCALE ANALYSIS] AT SER-14; SER-149; SER-151 AND SER-152</scope>
    <scope>IDENTIFICATION BY MASS SPECTROMETRY [LARGE SCALE ANALYSIS]</scope>
</reference>
<reference key="26">
    <citation type="journal article" date="2013" name="Cell">
        <title>Cortical dynein and asymmetric membrane elongation coordinately position the spindle in anaphase.</title>
        <authorList>
            <person name="Kiyomitsu T."/>
            <person name="Cheeseman I.M."/>
        </authorList>
    </citation>
    <scope>FUNCTION</scope>
    <scope>INTERACTION WITH NUMA1</scope>
    <scope>SUBCELLULAR LOCATION</scope>
</reference>
<reference key="27">
    <citation type="journal article" date="2013" name="J. Proteome Res.">
        <title>Toward a comprehensive characterization of a human cancer cell phosphoproteome.</title>
        <authorList>
            <person name="Zhou H."/>
            <person name="Di Palma S."/>
            <person name="Preisinger C."/>
            <person name="Peng M."/>
            <person name="Polat A.N."/>
            <person name="Heck A.J."/>
            <person name="Mohammed S."/>
        </authorList>
    </citation>
    <scope>PHOSPHORYLATION [LARGE SCALE ANALYSIS] AT THR-60; SER-95; SER-104; SER-188; SER-191; THR-378; SER-521; SER-540; SER-542; TYR-660; SER-674; SER-684; SER-709; SER-712; THR-736 AND THR-859</scope>
    <scope>IDENTIFICATION BY MASS SPECTROMETRY [LARGE SCALE ANALYSIS]</scope>
    <source>
        <tissue>Cervix carcinoma</tissue>
        <tissue>Erythroleukemia</tissue>
    </source>
</reference>
<reference key="28">
    <citation type="journal article" date="2014" name="J. Proteomics">
        <title>An enzyme assisted RP-RPLC approach for in-depth analysis of human liver phosphoproteome.</title>
        <authorList>
            <person name="Bian Y."/>
            <person name="Song C."/>
            <person name="Cheng K."/>
            <person name="Dong M."/>
            <person name="Wang F."/>
            <person name="Huang J."/>
            <person name="Sun D."/>
            <person name="Wang L."/>
            <person name="Ye M."/>
            <person name="Zou H."/>
        </authorList>
    </citation>
    <scope>PHOSPHORYLATION [LARGE SCALE ANALYSIS] AT SER-542 AND SER-555</scope>
    <scope>IDENTIFICATION BY MASS SPECTROMETRY [LARGE SCALE ANALYSIS]</scope>
    <source>
        <tissue>Liver</tissue>
    </source>
</reference>
<reference key="29">
    <citation type="journal article" date="2015" name="Proteomics">
        <title>N-terminome analysis of the human mitochondrial proteome.</title>
        <authorList>
            <person name="Vaca Jacome A.S."/>
            <person name="Rabilloud T."/>
            <person name="Schaeffer-Reiss C."/>
            <person name="Rompais M."/>
            <person name="Ayoub D."/>
            <person name="Lane L."/>
            <person name="Bairoch A."/>
            <person name="Van Dorsselaer A."/>
            <person name="Carapito C."/>
        </authorList>
    </citation>
    <scope>IDENTIFICATION BY MASS SPECTROMETRY [LARGE SCALE ANALYSIS]</scope>
</reference>
<reference key="30">
    <citation type="journal article" date="2000" name="Nat. Struct. Biol.">
        <title>Protein 4.1R core domain structure and insights into regulation of cytoskeletal organization.</title>
        <authorList>
            <person name="Han B.-G."/>
            <person name="Nunomura W."/>
            <person name="Takakuwa Y."/>
            <person name="Mohandas N."/>
            <person name="Jap B.K."/>
        </authorList>
    </citation>
    <scope>X-RAY CRYSTALLOGRAPHY (2.8 ANGSTROMS) OF 210-488</scope>
</reference>
<accession>P11171</accession>
<accession>B1ALH8</accession>
<accession>B1ALH9</accession>
<accession>D3DPM9</accession>
<accession>D3DPN0</accession>
<accession>P11176</accession>
<accession>Q14245</accession>
<accession>Q5TB35</accession>
<accession>Q5VXN8</accession>
<accession>Q8IXV9</accession>
<accession>Q9Y578</accession>
<accession>Q9Y579</accession>
<comment type="function">
    <text evidence="10">Protein 4.1 is a major structural element of the erythrocyte membrane skeleton. It plays a key role in regulating membrane physical properties of mechanical stability and deformability by stabilizing spectrin-actin interaction. Recruits DLG1 to membranes. Required for dynein-dynactin complex and NUMA1 recruitment at the mitotic cell cortex during anaphase (PubMed:23870127).</text>
</comment>
<comment type="subunit">
    <text evidence="1 4 5 10 12">Binds with a high affinity to glycophorin and with lower affinity to band III protein. Associates with the nuclear mitotic apparatus. Interacts with calmodulin (PubMed:10692436). Interacts with CPAP (PubMed:11003675). Interacts with DLG1 (PubMed:7937897). Also found to associate with contractile apparatus and tight junctions. Interacts with NUMA1; this interaction is negatively regulated by CDK1 during metaphase and promotes anaphase-specific localization of NUMA1 in symmetrically dividing cells (PubMed:23870127). Interacts with ATP2B1; regulates small intestinal calcium absorption through regulation of membrane expression of ATP2B1 (By similarity).</text>
</comment>
<comment type="interaction">
    <interactant intactId="EBI-10197451">
        <id>P11171-2</id>
    </interactant>
    <interactant intactId="EBI-77613">
        <id>P05067</id>
        <label>APP</label>
    </interactant>
    <organismsDiffer>false</organismsDiffer>
    <experiments>3</experiments>
</comment>
<comment type="interaction">
    <interactant intactId="EBI-10197451">
        <id>P11171-2</id>
    </interactant>
    <interactant intactId="EBI-724693">
        <id>P54105</id>
        <label>CLNS1A</label>
    </interactant>
    <organismsDiffer>false</organismsDiffer>
    <experiments>3</experiments>
</comment>
<comment type="interaction">
    <interactant intactId="EBI-10197451">
        <id>P11171-2</id>
    </interactant>
    <interactant intactId="EBI-724442">
        <id>P57060</id>
        <label>RWDD2B</label>
    </interactant>
    <organismsDiffer>false</organismsDiffer>
    <experiments>3</experiments>
</comment>
<comment type="interaction">
    <interactant intactId="EBI-10197451">
        <id>P11171-2</id>
    </interactant>
    <interactant intactId="EBI-597063">
        <id>Q8TBK6</id>
        <label>ZCCHC10</label>
    </interactant>
    <organismsDiffer>false</organismsDiffer>
    <experiments>3</experiments>
</comment>
<comment type="interaction">
    <interactant intactId="EBI-25852354">
        <id>P11171-7</id>
    </interactant>
    <interactant intactId="EBI-77613">
        <id>P05067</id>
        <label>APP</label>
    </interactant>
    <organismsDiffer>false</organismsDiffer>
    <experiments>3</experiments>
</comment>
<comment type="interaction">
    <interactant intactId="EBI-25852354">
        <id>P11171-7</id>
    </interactant>
    <interactant intactId="EBI-11953200">
        <id>Q494V2-2</id>
        <label>CFAP100</label>
    </interactant>
    <organismsDiffer>false</organismsDiffer>
    <experiments>3</experiments>
</comment>
<comment type="subcellular location">
    <subcellularLocation>
        <location evidence="6">Cytoplasm</location>
        <location evidence="6">Cytoskeleton</location>
    </subcellularLocation>
    <subcellularLocation>
        <location evidence="6 10">Cytoplasm</location>
        <location evidence="6 10">Cell cortex</location>
    </subcellularLocation>
    <subcellularLocation>
        <location evidence="6">Nucleus</location>
    </subcellularLocation>
</comment>
<comment type="alternative products">
    <event type="alternative splicing"/>
    <isoform>
        <id>P11171-1</id>
        <name>1</name>
        <sequence type="displayed"/>
    </isoform>
    <isoform>
        <id>P11171-2</id>
        <name>2</name>
        <sequence type="described" ref="VSP_000470"/>
    </isoform>
    <isoform>
        <id>P11171-3</id>
        <name>3</name>
        <sequence type="described" ref="VSP_000468 VSP_000471"/>
    </isoform>
    <isoform>
        <id>P11171-4</id>
        <name>4</name>
        <name>Erythroid</name>
        <sequence type="described" ref="VSP_000468 VSP_000470 VSP_000473"/>
    </isoform>
    <isoform>
        <id>P11171-5</id>
        <name>5</name>
        <name>Non-erythroid A</name>
        <sequence type="described" ref="VSP_000469 VSP_000470 VSP_000472"/>
    </isoform>
    <isoform>
        <id>P11171-6</id>
        <name>6</name>
        <name>Non-erythroid B</name>
        <sequence type="described" ref="VSP_000468 VSP_000469 VSP_000470 VSP_000472"/>
    </isoform>
    <isoform>
        <id>P11171-7</id>
        <name>7</name>
        <sequence type="described" ref="VSP_000471 VSP_012872 VSP_012873"/>
    </isoform>
</comment>
<comment type="PTM">
    <text>Phosphorylated at multiple sites by different protein kinases and each phosphorylation event selectively modulates the protein's functions.</text>
</comment>
<comment type="PTM">
    <text evidence="8">Phosphorylation on Tyr-660 reduces the ability of 4.1 to promote the assembly of the spectrin/actin/4.1 ternary complex.</text>
</comment>
<comment type="PTM">
    <text>O-glycosylated; contains N-acetylglucosamine side chains in the C-terminal domain.</text>
</comment>
<comment type="disease" evidence="11">
    <disease id="DI-00445">
        <name>Elliptocytosis 1</name>
        <acronym>EL1</acronym>
        <description>A Rhesus-linked form of hereditary elliptocytosis, a genetically heterogeneous, autosomal dominant hematologic disorder. It is characterized by variable hemolytic anemia and elliptical or oval red cell shape.</description>
        <dbReference type="MIM" id="611804"/>
    </disease>
    <text>The disease is caused by variants affecting the gene represented in this entry.</text>
</comment>
<evidence type="ECO:0000250" key="1">
    <source>
        <dbReference type="UniProtKB" id="P48193"/>
    </source>
</evidence>
<evidence type="ECO:0000255" key="2">
    <source>
        <dbReference type="PROSITE-ProRule" id="PRU00084"/>
    </source>
</evidence>
<evidence type="ECO:0000256" key="3">
    <source>
        <dbReference type="SAM" id="MobiDB-lite"/>
    </source>
</evidence>
<evidence type="ECO:0000269" key="4">
    <source>
    </source>
</evidence>
<evidence type="ECO:0000269" key="5">
    <source>
    </source>
</evidence>
<evidence type="ECO:0000269" key="6">
    <source>
    </source>
</evidence>
<evidence type="ECO:0000269" key="7">
    <source>
    </source>
</evidence>
<evidence type="ECO:0000269" key="8">
    <source>
    </source>
</evidence>
<evidence type="ECO:0000269" key="9">
    <source>
    </source>
</evidence>
<evidence type="ECO:0000269" key="10">
    <source>
    </source>
</evidence>
<evidence type="ECO:0000269" key="11">
    <source>
    </source>
</evidence>
<evidence type="ECO:0000269" key="12">
    <source>
    </source>
</evidence>
<evidence type="ECO:0000269" key="13">
    <source ref="9"/>
</evidence>
<evidence type="ECO:0000303" key="14">
    <source>
    </source>
</evidence>
<evidence type="ECO:0000303" key="15">
    <source>
    </source>
</evidence>
<evidence type="ECO:0000303" key="16">
    <source>
    </source>
</evidence>
<evidence type="ECO:0000303" key="17">
    <source>
    </source>
</evidence>
<evidence type="ECO:0000303" key="18">
    <source>
    </source>
</evidence>
<evidence type="ECO:0000305" key="19"/>
<evidence type="ECO:0000312" key="20">
    <source>
        <dbReference type="HGNC" id="HGNC:3377"/>
    </source>
</evidence>
<evidence type="ECO:0007744" key="21">
    <source>
    </source>
</evidence>
<evidence type="ECO:0007744" key="22">
    <source>
    </source>
</evidence>
<evidence type="ECO:0007744" key="23">
    <source>
    </source>
</evidence>
<evidence type="ECO:0007744" key="24">
    <source>
    </source>
</evidence>
<evidence type="ECO:0007744" key="25">
    <source>
    </source>
</evidence>
<evidence type="ECO:0007829" key="26">
    <source>
        <dbReference type="PDB" id="1GG3"/>
    </source>
</evidence>
<evidence type="ECO:0007829" key="27">
    <source>
        <dbReference type="PDB" id="3QIJ"/>
    </source>
</evidence>
<proteinExistence type="evidence at protein level"/>
<dbReference type="EMBL" id="M14993">
    <property type="protein sequence ID" value="AAA35795.1"/>
    <property type="molecule type" value="mRNA"/>
</dbReference>
<dbReference type="EMBL" id="J03796">
    <property type="protein sequence ID" value="AAA35793.1"/>
    <property type="molecule type" value="mRNA"/>
</dbReference>
<dbReference type="EMBL" id="J03796">
    <property type="protein sequence ID" value="AAA35794.1"/>
    <property type="molecule type" value="mRNA"/>
</dbReference>
<dbReference type="EMBL" id="M61733">
    <property type="protein sequence ID" value="AAA35797.1"/>
    <property type="molecule type" value="mRNA"/>
</dbReference>
<dbReference type="EMBL" id="AF156225">
    <property type="protein sequence ID" value="AAD42222.1"/>
    <property type="molecule type" value="mRNA"/>
</dbReference>
<dbReference type="EMBL" id="AL138785">
    <property type="status" value="NOT_ANNOTATED_CDS"/>
    <property type="molecule type" value="Genomic_DNA"/>
</dbReference>
<dbReference type="EMBL" id="AL357500">
    <property type="status" value="NOT_ANNOTATED_CDS"/>
    <property type="molecule type" value="Genomic_DNA"/>
</dbReference>
<dbReference type="EMBL" id="CH471059">
    <property type="protein sequence ID" value="EAX07663.1"/>
    <property type="molecule type" value="Genomic_DNA"/>
</dbReference>
<dbReference type="EMBL" id="CH471059">
    <property type="protein sequence ID" value="EAX07665.1"/>
    <property type="molecule type" value="Genomic_DNA"/>
</dbReference>
<dbReference type="EMBL" id="CH471059">
    <property type="protein sequence ID" value="EAX07667.1"/>
    <property type="molecule type" value="Genomic_DNA"/>
</dbReference>
<dbReference type="EMBL" id="CH471059">
    <property type="protein sequence ID" value="EAX07668.1"/>
    <property type="molecule type" value="Genomic_DNA"/>
</dbReference>
<dbReference type="EMBL" id="BC039079">
    <property type="protein sequence ID" value="AAH39079.1"/>
    <property type="molecule type" value="mRNA"/>
</dbReference>
<dbReference type="EMBL" id="AF156226">
    <property type="protein sequence ID" value="AAD42223.1"/>
    <property type="molecule type" value="Genomic_DNA"/>
</dbReference>
<dbReference type="CCDS" id="CCDS330.1">
    <molecule id="P11171-5"/>
</dbReference>
<dbReference type="CCDS" id="CCDS331.1">
    <molecule id="P11171-4"/>
</dbReference>
<dbReference type="CCDS" id="CCDS53288.1">
    <molecule id="P11171-1"/>
</dbReference>
<dbReference type="CCDS" id="CCDS53289.1">
    <molecule id="P11171-7"/>
</dbReference>
<dbReference type="PIR" id="A39810">
    <property type="entry name" value="MMHUE4"/>
</dbReference>
<dbReference type="RefSeq" id="NP_001159477.1">
    <molecule id="P11171-1"/>
    <property type="nucleotide sequence ID" value="NM_001166005.2"/>
</dbReference>
<dbReference type="RefSeq" id="NP_001159478.1">
    <molecule id="P11171-7"/>
    <property type="nucleotide sequence ID" value="NM_001166006.2"/>
</dbReference>
<dbReference type="RefSeq" id="NP_001362942.1">
    <molecule id="P11171-1"/>
    <property type="nucleotide sequence ID" value="NM_001376013.1"/>
</dbReference>
<dbReference type="RefSeq" id="NP_004428.1">
    <molecule id="P11171-4"/>
    <property type="nucleotide sequence ID" value="NM_004437.4"/>
</dbReference>
<dbReference type="RefSeq" id="NP_976217.1">
    <molecule id="P11171-3"/>
    <property type="nucleotide sequence ID" value="NM_203342.3"/>
</dbReference>
<dbReference type="RefSeq" id="NP_976218.1">
    <molecule id="P11171-5"/>
    <property type="nucleotide sequence ID" value="NM_203343.3"/>
</dbReference>
<dbReference type="RefSeq" id="XP_005245818.1">
    <property type="nucleotide sequence ID" value="XM_005245761.1"/>
</dbReference>
<dbReference type="RefSeq" id="XP_005245821.1">
    <molecule id="P11171-2"/>
    <property type="nucleotide sequence ID" value="XM_005245764.2"/>
</dbReference>
<dbReference type="RefSeq" id="XP_016856078.1">
    <property type="nucleotide sequence ID" value="XM_017000589.1"/>
</dbReference>
<dbReference type="RefSeq" id="XP_054190983.1">
    <molecule id="P11171-2"/>
    <property type="nucleotide sequence ID" value="XM_054335008.1"/>
</dbReference>
<dbReference type="PDB" id="1GG3">
    <property type="method" value="X-ray"/>
    <property type="resolution" value="2.80 A"/>
    <property type="chains" value="A/B/C=210-488"/>
</dbReference>
<dbReference type="PDB" id="2RQ1">
    <property type="method" value="NMR"/>
    <property type="chains" value="A=292-396"/>
</dbReference>
<dbReference type="PDB" id="3QIJ">
    <property type="method" value="X-ray"/>
    <property type="resolution" value="1.80 A"/>
    <property type="chains" value="A/B=211-488"/>
</dbReference>
<dbReference type="PDBsum" id="1GG3"/>
<dbReference type="PDBsum" id="2RQ1"/>
<dbReference type="PDBsum" id="3QIJ"/>
<dbReference type="BMRB" id="P11171"/>
<dbReference type="SMR" id="P11171"/>
<dbReference type="BioGRID" id="108349">
    <property type="interactions" value="130"/>
</dbReference>
<dbReference type="ComplexPortal" id="CPX-658">
    <property type="entry name" value="Actin junctional complex"/>
</dbReference>
<dbReference type="CORUM" id="P11171"/>
<dbReference type="DIP" id="DIP-17032N"/>
<dbReference type="FunCoup" id="P11171">
    <property type="interactions" value="1302"/>
</dbReference>
<dbReference type="IntAct" id="P11171">
    <property type="interactions" value="60"/>
</dbReference>
<dbReference type="MINT" id="P11171"/>
<dbReference type="STRING" id="9606.ENSP00000345259"/>
<dbReference type="TCDB" id="8.A.25.1.2">
    <property type="family name" value="the ezrin/radixin/moesin (ezrin) family"/>
</dbReference>
<dbReference type="GlyConnect" id="515">
    <property type="glycosylation" value="1 O-GlcNAc glycan (2 sites)"/>
</dbReference>
<dbReference type="GlyCosmos" id="P11171">
    <property type="glycosylation" value="3 sites, 1 glycan"/>
</dbReference>
<dbReference type="GlyGen" id="P11171">
    <property type="glycosylation" value="5 sites, 1 N-linked glycan (1 site), 2 O-linked glycans (4 sites)"/>
</dbReference>
<dbReference type="iPTMnet" id="P11171"/>
<dbReference type="MetOSite" id="P11171"/>
<dbReference type="PhosphoSitePlus" id="P11171"/>
<dbReference type="SwissPalm" id="P11171"/>
<dbReference type="BioMuta" id="EPB41"/>
<dbReference type="DMDM" id="90101808"/>
<dbReference type="jPOST" id="P11171"/>
<dbReference type="MassIVE" id="P11171"/>
<dbReference type="PaxDb" id="9606-ENSP00000345259"/>
<dbReference type="PeptideAtlas" id="P11171"/>
<dbReference type="ProteomicsDB" id="52706">
    <molecule id="P11171-1"/>
</dbReference>
<dbReference type="ProteomicsDB" id="52707">
    <molecule id="P11171-2"/>
</dbReference>
<dbReference type="ProteomicsDB" id="52708">
    <molecule id="P11171-3"/>
</dbReference>
<dbReference type="ProteomicsDB" id="52709">
    <molecule id="P11171-4"/>
</dbReference>
<dbReference type="ProteomicsDB" id="52710">
    <molecule id="P11171-5"/>
</dbReference>
<dbReference type="ProteomicsDB" id="52711">
    <molecule id="P11171-6"/>
</dbReference>
<dbReference type="ProteomicsDB" id="52712">
    <molecule id="P11171-7"/>
</dbReference>
<dbReference type="Pumba" id="P11171"/>
<dbReference type="Antibodypedia" id="30998">
    <property type="antibodies" value="355 antibodies from 30 providers"/>
</dbReference>
<dbReference type="DNASU" id="2035"/>
<dbReference type="Ensembl" id="ENST00000343067.9">
    <molecule id="P11171-1"/>
    <property type="protein sequence ID" value="ENSP00000345259.4"/>
    <property type="gene ID" value="ENSG00000159023.23"/>
</dbReference>
<dbReference type="Ensembl" id="ENST00000347529.7">
    <molecule id="P11171-5"/>
    <property type="protein sequence ID" value="ENSP00000290100.6"/>
    <property type="gene ID" value="ENSG00000159023.23"/>
</dbReference>
<dbReference type="Ensembl" id="ENST00000373797.2">
    <molecule id="P11171-7"/>
    <property type="protein sequence ID" value="ENSP00000362903.1"/>
    <property type="gene ID" value="ENSG00000159023.23"/>
</dbReference>
<dbReference type="Ensembl" id="ENST00000373798.5">
    <molecule id="P11171-1"/>
    <property type="protein sequence ID" value="ENSP00000362904.1"/>
    <property type="gene ID" value="ENSG00000159023.23"/>
</dbReference>
<dbReference type="Ensembl" id="ENST00000373800.7">
    <molecule id="P11171-4"/>
    <property type="protein sequence ID" value="ENSP00000362906.3"/>
    <property type="gene ID" value="ENSG00000159023.23"/>
</dbReference>
<dbReference type="GeneID" id="2035"/>
<dbReference type="KEGG" id="hsa:2035"/>
<dbReference type="MANE-Select" id="ENST00000343067.9">
    <property type="protein sequence ID" value="ENSP00000345259.4"/>
    <property type="RefSeq nucleotide sequence ID" value="NM_001376013.1"/>
    <property type="RefSeq protein sequence ID" value="NP_001362942.1"/>
</dbReference>
<dbReference type="UCSC" id="uc001brg.3">
    <molecule id="P11171-1"/>
    <property type="organism name" value="human"/>
</dbReference>
<dbReference type="AGR" id="HGNC:3377"/>
<dbReference type="CTD" id="2035"/>
<dbReference type="DisGeNET" id="2035"/>
<dbReference type="GeneCards" id="EPB41"/>
<dbReference type="HGNC" id="HGNC:3377">
    <property type="gene designation" value="EPB41"/>
</dbReference>
<dbReference type="HPA" id="ENSG00000159023">
    <property type="expression patterns" value="Tissue enhanced (retina)"/>
</dbReference>
<dbReference type="MalaCards" id="EPB41"/>
<dbReference type="MIM" id="130500">
    <property type="type" value="gene"/>
</dbReference>
<dbReference type="MIM" id="611804">
    <property type="type" value="phenotype"/>
</dbReference>
<dbReference type="neXtProt" id="NX_P11171"/>
<dbReference type="OpenTargets" id="ENSG00000159023"/>
<dbReference type="Orphanet" id="288">
    <property type="disease" value="Hereditary elliptocytosis"/>
</dbReference>
<dbReference type="PharmGKB" id="PA27810"/>
<dbReference type="VEuPathDB" id="HostDB:ENSG00000159023"/>
<dbReference type="eggNOG" id="KOG3527">
    <property type="taxonomic scope" value="Eukaryota"/>
</dbReference>
<dbReference type="GeneTree" id="ENSGT00940000157833"/>
<dbReference type="HOGENOM" id="CLU_003623_0_1_1"/>
<dbReference type="InParanoid" id="P11171"/>
<dbReference type="OMA" id="EHHTFFX"/>
<dbReference type="OrthoDB" id="6589456at2759"/>
<dbReference type="PAN-GO" id="P11171">
    <property type="GO annotations" value="3 GO annotations based on evolutionary models"/>
</dbReference>
<dbReference type="PhylomeDB" id="P11171"/>
<dbReference type="TreeFam" id="TF351626"/>
<dbReference type="PathwayCommons" id="P11171"/>
<dbReference type="Reactome" id="R-HSA-6794361">
    <property type="pathway name" value="Neurexins and neuroligins"/>
</dbReference>
<dbReference type="SignaLink" id="P11171"/>
<dbReference type="SIGNOR" id="P11171"/>
<dbReference type="BioGRID-ORCS" id="2035">
    <property type="hits" value="19 hits in 1176 CRISPR screens"/>
</dbReference>
<dbReference type="CD-CODE" id="8C2F96ED">
    <property type="entry name" value="Centrosome"/>
</dbReference>
<dbReference type="CD-CODE" id="FB4E32DD">
    <property type="entry name" value="Presynaptic clusters and postsynaptic densities"/>
</dbReference>
<dbReference type="ChiTaRS" id="EPB41">
    <property type="organism name" value="human"/>
</dbReference>
<dbReference type="EvolutionaryTrace" id="P11171"/>
<dbReference type="GeneWiki" id="EPB41"/>
<dbReference type="GenomeRNAi" id="2035"/>
<dbReference type="Pharos" id="P11171">
    <property type="development level" value="Tbio"/>
</dbReference>
<dbReference type="PRO" id="PR:P11171"/>
<dbReference type="Proteomes" id="UP000005640">
    <property type="component" value="Chromosome 1"/>
</dbReference>
<dbReference type="RNAct" id="P11171">
    <property type="molecule type" value="protein"/>
</dbReference>
<dbReference type="Bgee" id="ENSG00000159023">
    <property type="expression patterns" value="Expressed in trabecular bone tissue and 177 other cell types or tissues"/>
</dbReference>
<dbReference type="ExpressionAtlas" id="P11171">
    <property type="expression patterns" value="baseline and differential"/>
</dbReference>
<dbReference type="GO" id="GO:0016323">
    <property type="term" value="C:basolateral plasma membrane"/>
    <property type="evidence" value="ECO:0000250"/>
    <property type="project" value="UniProtKB"/>
</dbReference>
<dbReference type="GO" id="GO:0005938">
    <property type="term" value="C:cell cortex"/>
    <property type="evidence" value="ECO:0000314"/>
    <property type="project" value="UniProtKB"/>
</dbReference>
<dbReference type="GO" id="GO:0030054">
    <property type="term" value="C:cell junction"/>
    <property type="evidence" value="ECO:0000314"/>
    <property type="project" value="HPA"/>
</dbReference>
<dbReference type="GO" id="GO:0030863">
    <property type="term" value="C:cortical cytoskeleton"/>
    <property type="evidence" value="ECO:0000314"/>
    <property type="project" value="UniProtKB"/>
</dbReference>
<dbReference type="GO" id="GO:0005856">
    <property type="term" value="C:cytoskeleton"/>
    <property type="evidence" value="ECO:0000318"/>
    <property type="project" value="GO_Central"/>
</dbReference>
<dbReference type="GO" id="GO:0005829">
    <property type="term" value="C:cytosol"/>
    <property type="evidence" value="ECO:0000314"/>
    <property type="project" value="HPA"/>
</dbReference>
<dbReference type="GO" id="GO:0045171">
    <property type="term" value="C:intercellular bridge"/>
    <property type="evidence" value="ECO:0000314"/>
    <property type="project" value="HPA"/>
</dbReference>
<dbReference type="GO" id="GO:0072686">
    <property type="term" value="C:mitotic spindle"/>
    <property type="evidence" value="ECO:0000314"/>
    <property type="project" value="HPA"/>
</dbReference>
<dbReference type="GO" id="GO:0016604">
    <property type="term" value="C:nuclear body"/>
    <property type="evidence" value="ECO:0000314"/>
    <property type="project" value="HPA"/>
</dbReference>
<dbReference type="GO" id="GO:0005886">
    <property type="term" value="C:plasma membrane"/>
    <property type="evidence" value="ECO:0000314"/>
    <property type="project" value="HPA"/>
</dbReference>
<dbReference type="GO" id="GO:0032991">
    <property type="term" value="C:protein-containing complex"/>
    <property type="evidence" value="ECO:0000314"/>
    <property type="project" value="UniProtKB"/>
</dbReference>
<dbReference type="GO" id="GO:0014731">
    <property type="term" value="C:spectrin-associated cytoskeleton"/>
    <property type="evidence" value="ECO:0000304"/>
    <property type="project" value="BHF-UCL"/>
</dbReference>
<dbReference type="GO" id="GO:0005545">
    <property type="term" value="F:1-phosphatidylinositol binding"/>
    <property type="evidence" value="ECO:0000314"/>
    <property type="project" value="UniProtKB"/>
</dbReference>
<dbReference type="GO" id="GO:0003779">
    <property type="term" value="F:actin binding"/>
    <property type="evidence" value="ECO:0007669"/>
    <property type="project" value="UniProtKB-KW"/>
</dbReference>
<dbReference type="GO" id="GO:0005516">
    <property type="term" value="F:calmodulin binding"/>
    <property type="evidence" value="ECO:0007669"/>
    <property type="project" value="UniProtKB-KW"/>
</dbReference>
<dbReference type="GO" id="GO:0051219">
    <property type="term" value="F:phosphoprotein binding"/>
    <property type="evidence" value="ECO:0000315"/>
    <property type="project" value="CAFA"/>
</dbReference>
<dbReference type="GO" id="GO:0030507">
    <property type="term" value="F:spectrin binding"/>
    <property type="evidence" value="ECO:0000304"/>
    <property type="project" value="BHF-UCL"/>
</dbReference>
<dbReference type="GO" id="GO:0005200">
    <property type="term" value="F:structural constituent of cytoskeleton"/>
    <property type="evidence" value="ECO:0000315"/>
    <property type="project" value="UniProtKB"/>
</dbReference>
<dbReference type="GO" id="GO:0030036">
    <property type="term" value="P:actin cytoskeleton organization"/>
    <property type="evidence" value="ECO:0000303"/>
    <property type="project" value="UniProtKB"/>
</dbReference>
<dbReference type="GO" id="GO:0031032">
    <property type="term" value="P:actomyosin structure organization"/>
    <property type="evidence" value="ECO:0000318"/>
    <property type="project" value="GO_Central"/>
</dbReference>
<dbReference type="GO" id="GO:0051301">
    <property type="term" value="P:cell division"/>
    <property type="evidence" value="ECO:0007669"/>
    <property type="project" value="UniProtKB-KW"/>
</dbReference>
<dbReference type="GO" id="GO:0030866">
    <property type="term" value="P:cortical actin cytoskeleton organization"/>
    <property type="evidence" value="ECO:0007669"/>
    <property type="project" value="InterPro"/>
</dbReference>
<dbReference type="GO" id="GO:0032092">
    <property type="term" value="P:positive regulation of protein binding"/>
    <property type="evidence" value="ECO:0000314"/>
    <property type="project" value="BHF-UCL"/>
</dbReference>
<dbReference type="GO" id="GO:1904778">
    <property type="term" value="P:positive regulation of protein localization to cell cortex"/>
    <property type="evidence" value="ECO:0000315"/>
    <property type="project" value="UniProtKB"/>
</dbReference>
<dbReference type="GO" id="GO:0051924">
    <property type="term" value="P:regulation of calcium ion transport"/>
    <property type="evidence" value="ECO:0000250"/>
    <property type="project" value="UniProtKB"/>
</dbReference>
<dbReference type="GO" id="GO:1904478">
    <property type="term" value="P:regulation of intestinal absorption"/>
    <property type="evidence" value="ECO:0000250"/>
    <property type="project" value="UniProtKB"/>
</dbReference>
<dbReference type="CDD" id="cd14473">
    <property type="entry name" value="FERM_B-lobe"/>
    <property type="match status" value="1"/>
</dbReference>
<dbReference type="CDD" id="cd13184">
    <property type="entry name" value="FERM_C_4_1_family"/>
    <property type="match status" value="1"/>
</dbReference>
<dbReference type="CDD" id="cd17105">
    <property type="entry name" value="FERM_F1_EPB41"/>
    <property type="match status" value="1"/>
</dbReference>
<dbReference type="DisProt" id="DP00678"/>
<dbReference type="FunFam" id="1.20.80.10:FF:000001">
    <property type="entry name" value="Erythrocyte membrane protein band 4.1"/>
    <property type="match status" value="1"/>
</dbReference>
<dbReference type="FunFam" id="2.30.29.30:FF:000001">
    <property type="entry name" value="Erythrocyte membrane protein band 4.1"/>
    <property type="match status" value="1"/>
</dbReference>
<dbReference type="FunFam" id="3.10.20.90:FF:000002">
    <property type="entry name" value="Erythrocyte protein band 4.1-like 3"/>
    <property type="match status" value="1"/>
</dbReference>
<dbReference type="Gene3D" id="1.20.80.10">
    <property type="match status" value="1"/>
</dbReference>
<dbReference type="Gene3D" id="3.10.20.90">
    <property type="entry name" value="Phosphatidylinositol 3-kinase Catalytic Subunit, Chain A, domain 1"/>
    <property type="match status" value="1"/>
</dbReference>
<dbReference type="Gene3D" id="2.30.29.30">
    <property type="entry name" value="Pleckstrin-homology domain (PH domain)/Phosphotyrosine-binding domain (PTB)"/>
    <property type="match status" value="1"/>
</dbReference>
<dbReference type="InterPro" id="IPR008379">
    <property type="entry name" value="Band_4.1_C"/>
</dbReference>
<dbReference type="InterPro" id="IPR019749">
    <property type="entry name" value="Band_41_domain"/>
</dbReference>
<dbReference type="InterPro" id="IPR021187">
    <property type="entry name" value="EPB4.1_FERM_F1"/>
</dbReference>
<dbReference type="InterPro" id="IPR000798">
    <property type="entry name" value="Ez/rad/moesin-like"/>
</dbReference>
<dbReference type="InterPro" id="IPR014847">
    <property type="entry name" value="FA"/>
</dbReference>
<dbReference type="InterPro" id="IPR014352">
    <property type="entry name" value="FERM/acyl-CoA-bd_prot_sf"/>
</dbReference>
<dbReference type="InterPro" id="IPR035963">
    <property type="entry name" value="FERM_2"/>
</dbReference>
<dbReference type="InterPro" id="IPR019748">
    <property type="entry name" value="FERM_central"/>
</dbReference>
<dbReference type="InterPro" id="IPR019747">
    <property type="entry name" value="FERM_CS"/>
</dbReference>
<dbReference type="InterPro" id="IPR000299">
    <property type="entry name" value="FERM_domain"/>
</dbReference>
<dbReference type="InterPro" id="IPR018979">
    <property type="entry name" value="FERM_N"/>
</dbReference>
<dbReference type="InterPro" id="IPR018980">
    <property type="entry name" value="FERM_PH-like_C"/>
</dbReference>
<dbReference type="InterPro" id="IPR011993">
    <property type="entry name" value="PH-like_dom_sf"/>
</dbReference>
<dbReference type="InterPro" id="IPR007477">
    <property type="entry name" value="SAB_dom"/>
</dbReference>
<dbReference type="InterPro" id="IPR029071">
    <property type="entry name" value="Ubiquitin-like_domsf"/>
</dbReference>
<dbReference type="PANTHER" id="PTHR23280">
    <property type="entry name" value="4.1 G PROTEIN"/>
    <property type="match status" value="1"/>
</dbReference>
<dbReference type="PANTHER" id="PTHR23280:SF12">
    <property type="entry name" value="PROTEIN 4.1"/>
    <property type="match status" value="1"/>
</dbReference>
<dbReference type="Pfam" id="PF05902">
    <property type="entry name" value="4_1_CTD"/>
    <property type="match status" value="1"/>
</dbReference>
<dbReference type="Pfam" id="PF08736">
    <property type="entry name" value="FA"/>
    <property type="match status" value="1"/>
</dbReference>
<dbReference type="Pfam" id="PF09380">
    <property type="entry name" value="FERM_C"/>
    <property type="match status" value="1"/>
</dbReference>
<dbReference type="Pfam" id="PF00373">
    <property type="entry name" value="FERM_M"/>
    <property type="match status" value="1"/>
</dbReference>
<dbReference type="Pfam" id="PF09379">
    <property type="entry name" value="FERM_N"/>
    <property type="match status" value="1"/>
</dbReference>
<dbReference type="Pfam" id="PF04382">
    <property type="entry name" value="SAB"/>
    <property type="match status" value="1"/>
</dbReference>
<dbReference type="PIRSF" id="PIRSF002304">
    <property type="entry name" value="Membrane_skeletal_4_1"/>
    <property type="match status" value="1"/>
</dbReference>
<dbReference type="PRINTS" id="PR00935">
    <property type="entry name" value="BAND41"/>
</dbReference>
<dbReference type="PRINTS" id="PR00661">
    <property type="entry name" value="ERMFAMILY"/>
</dbReference>
<dbReference type="SMART" id="SM00295">
    <property type="entry name" value="B41"/>
    <property type="match status" value="1"/>
</dbReference>
<dbReference type="SMART" id="SM01195">
    <property type="entry name" value="FA"/>
    <property type="match status" value="1"/>
</dbReference>
<dbReference type="SMART" id="SM01196">
    <property type="entry name" value="FERM_C"/>
    <property type="match status" value="1"/>
</dbReference>
<dbReference type="SUPFAM" id="SSF50729">
    <property type="entry name" value="PH domain-like"/>
    <property type="match status" value="1"/>
</dbReference>
<dbReference type="SUPFAM" id="SSF47031">
    <property type="entry name" value="Second domain of FERM"/>
    <property type="match status" value="1"/>
</dbReference>
<dbReference type="SUPFAM" id="SSF54236">
    <property type="entry name" value="Ubiquitin-like"/>
    <property type="match status" value="1"/>
</dbReference>
<dbReference type="PROSITE" id="PS00660">
    <property type="entry name" value="FERM_1"/>
    <property type="match status" value="1"/>
</dbReference>
<dbReference type="PROSITE" id="PS00661">
    <property type="entry name" value="FERM_2"/>
    <property type="match status" value="1"/>
</dbReference>
<dbReference type="PROSITE" id="PS50057">
    <property type="entry name" value="FERM_3"/>
    <property type="match status" value="1"/>
</dbReference>
<protein>
    <recommendedName>
        <fullName>Protein 4.1</fullName>
        <shortName>P4.1</shortName>
    </recommendedName>
    <alternativeName>
        <fullName>4.1R</fullName>
    </alternativeName>
    <alternativeName>
        <fullName>Band 4.1</fullName>
    </alternativeName>
    <alternativeName>
        <fullName>EPB4.1</fullName>
    </alternativeName>
    <alternativeName>
        <fullName evidence="20">Erythrocyte membrane protein band 4.1</fullName>
    </alternativeName>
</protein>